<feature type="chain" id="PRO_0000058500" description="Retrovirus-related Pol polyprotein from type-1 retrotransposable element R2">
    <location>
        <begin position="1" status="less than"/>
        <end position="711"/>
    </location>
</feature>
<feature type="domain" description="Reverse transcriptase" evidence="1">
    <location>
        <begin position="45"/>
        <end position="323"/>
    </location>
</feature>
<feature type="region of interest" description="Nucleic acid-binding endonuclease">
    <location>
        <begin position="444"/>
        <end position="711"/>
    </location>
</feature>
<feature type="non-terminal residue">
    <location>
        <position position="1"/>
    </location>
</feature>
<name>PO22_POPJA</name>
<keyword id="KW-0255">Endonuclease</keyword>
<keyword id="KW-0378">Hydrolase</keyword>
<keyword id="KW-0540">Nuclease</keyword>
<keyword id="KW-0548">Nucleotidyltransferase</keyword>
<keyword id="KW-0695">RNA-directed DNA polymerase</keyword>
<keyword id="KW-0808">Transferase</keyword>
<keyword id="KW-0814">Transposable element</keyword>
<dbReference type="EC" id="2.7.7.49"/>
<dbReference type="EMBL" id="L00947">
    <property type="protein sequence ID" value="AAA29785.1"/>
    <property type="molecule type" value="Genomic_DNA"/>
</dbReference>
<dbReference type="PIR" id="H44490">
    <property type="entry name" value="H44490"/>
</dbReference>
<dbReference type="SMR" id="Q03274"/>
<dbReference type="GO" id="GO:0004519">
    <property type="term" value="F:endonuclease activity"/>
    <property type="evidence" value="ECO:0007669"/>
    <property type="project" value="UniProtKB-KW"/>
</dbReference>
<dbReference type="GO" id="GO:0003964">
    <property type="term" value="F:RNA-directed DNA polymerase activity"/>
    <property type="evidence" value="ECO:0007669"/>
    <property type="project" value="UniProtKB-KW"/>
</dbReference>
<dbReference type="CDD" id="cd01650">
    <property type="entry name" value="RT_nLTR_like"/>
    <property type="match status" value="1"/>
</dbReference>
<dbReference type="InterPro" id="IPR043502">
    <property type="entry name" value="DNA/RNA_pol_sf"/>
</dbReference>
<dbReference type="InterPro" id="IPR000477">
    <property type="entry name" value="RT_dom"/>
</dbReference>
<dbReference type="PANTHER" id="PTHR19446">
    <property type="entry name" value="REVERSE TRANSCRIPTASES"/>
    <property type="match status" value="1"/>
</dbReference>
<dbReference type="Pfam" id="PF00078">
    <property type="entry name" value="RVT_1"/>
    <property type="match status" value="1"/>
</dbReference>
<dbReference type="SUPFAM" id="SSF56672">
    <property type="entry name" value="DNA/RNA polymerases"/>
    <property type="match status" value="1"/>
</dbReference>
<dbReference type="PROSITE" id="PS50878">
    <property type="entry name" value="RT_POL"/>
    <property type="match status" value="1"/>
</dbReference>
<proteinExistence type="predicted"/>
<comment type="catalytic activity">
    <reaction evidence="1">
        <text>DNA(n) + a 2'-deoxyribonucleoside 5'-triphosphate = DNA(n+1) + diphosphate</text>
        <dbReference type="Rhea" id="RHEA:22508"/>
        <dbReference type="Rhea" id="RHEA-COMP:17339"/>
        <dbReference type="Rhea" id="RHEA-COMP:17340"/>
        <dbReference type="ChEBI" id="CHEBI:33019"/>
        <dbReference type="ChEBI" id="CHEBI:61560"/>
        <dbReference type="ChEBI" id="CHEBI:173112"/>
        <dbReference type="EC" id="2.7.7.49"/>
    </reaction>
</comment>
<accession>Q03274</accession>
<protein>
    <recommendedName>
        <fullName>Retrovirus-related Pol polyprotein from type-1 retrotransposable element R2</fullName>
    </recommendedName>
    <alternativeName>
        <fullName>Retrovirus-related Pol polyprotein from type I retrotransposable element R2</fullName>
    </alternativeName>
    <domain>
        <recommendedName>
            <fullName>Reverse transcriptase</fullName>
            <ecNumber>2.7.7.49</ecNumber>
        </recommendedName>
    </domain>
    <domain>
        <recommendedName>
            <fullName>Endonuclease</fullName>
        </recommendedName>
    </domain>
</protein>
<evidence type="ECO:0000255" key="1">
    <source>
        <dbReference type="PROSITE-ProRule" id="PRU00405"/>
    </source>
</evidence>
<reference key="1">
    <citation type="journal article" date="1993" name="Mol. Biol. Evol.">
        <title>Sequence relationship of retrotransposable elements R1 and R2 within and between divergent insect species.</title>
        <authorList>
            <person name="Burke W.D."/>
            <person name="Eickbush D.G."/>
            <person name="Xiong Y."/>
            <person name="Jakubczak J.L."/>
            <person name="Eickbush T.H."/>
        </authorList>
    </citation>
    <scope>NUCLEOTIDE SEQUENCE [GENOMIC DNA]</scope>
</reference>
<reference key="2">
    <citation type="journal article" date="1991" name="Proc. Natl. Acad. Sci. U.S.A.">
        <title>Retrotransposable elements R1 and R2 interrupt the rRNA genes of most insects.</title>
        <authorList>
            <person name="Jakubczak J.L."/>
            <person name="Burke W.D."/>
            <person name="Eickbush T.H."/>
        </authorList>
    </citation>
    <scope>NUCLEOTIDE SEQUENCE [GENOMIC DNA] OF 534-551</scope>
</reference>
<organism>
    <name type="scientific">Popillia japonica</name>
    <name type="common">Japanese beetle</name>
    <dbReference type="NCBI Taxonomy" id="7064"/>
    <lineage>
        <taxon>Eukaryota</taxon>
        <taxon>Metazoa</taxon>
        <taxon>Ecdysozoa</taxon>
        <taxon>Arthropoda</taxon>
        <taxon>Hexapoda</taxon>
        <taxon>Insecta</taxon>
        <taxon>Pterygota</taxon>
        <taxon>Neoptera</taxon>
        <taxon>Endopterygota</taxon>
        <taxon>Coleoptera</taxon>
        <taxon>Polyphaga</taxon>
        <taxon>Scarabaeiformia</taxon>
        <taxon>Scarabaeidae</taxon>
        <taxon>Rutelinae</taxon>
        <taxon>Popillia</taxon>
    </lineage>
</organism>
<sequence length="711" mass="79459">HTYRPIAREEIQCAIKGWKPSAPGSDGLTVQAITRTRLPRNFVQLHLLRGHVPTPWTAMRTTLIPKDGDLENPSNWRPITIASALQRLLHRILAKRLEAAVELHPAQKGYARIDGTLVNSLLLDTYISSRREQRKTYNVVSLDVRKAFDTVSHSSICRALQRLGIDEGTSNYITGSLSDSTTTIRVGPGSQTRKICIRRGVKQGDPLSPFLFNAVLDELLCSLQSTPGIGGTIGEEKIPVLAFADDLLLLEDNDVLLPTTLATVANFFRLRGMSLNAKKSVSISVAASGGVCIPRTKPFLRVDNVLLPVTDRMQTFRYLGHFFGLSGAAKPTVYNLSRWLKCVEAAPLKPEQKLSLIREHVVPKLLYGLQNPSVTARTLRDADKLIRTTVKRCLHLHLHTPNQCFYARVRDGGLGLTDLRRSIPRIMLDRINARRSSDPMAVALFSCPSFDHLRGRLVALAGDVPPSHFWREAIANHTTTKGLEAASDDPASRSWIFRKPYGWSGKDFVRAIHLRTGNLPTKAIPSNPAGERLCRGGCGKQATISHVLQRCPVVQPERIRRHNEIARKIAAHCRSKGWTVEEEPHIRHPLGHLYKPDIVIHREGLPSVVCDVQVSWDGYEPLDEAWRNKQRTYDHDLFRTAAGRRWPGKTFLHLPAILGARGIWPRCNSETASALAFTNQLKASWLHSCLKWDSTLHTSFMRAVWSRQAGA</sequence>